<reference key="1">
    <citation type="journal article" date="1999" name="DNA Res.">
        <title>Structural analysis of Arabidopsis thaliana chromosome 5. IX. Sequence features of the regions of 1,011,550 bp covered by seventeen P1 and TAC clones.</title>
        <authorList>
            <person name="Kaneko T."/>
            <person name="Katoh T."/>
            <person name="Sato S."/>
            <person name="Nakamura Y."/>
            <person name="Asamizu E."/>
            <person name="Kotani H."/>
            <person name="Miyajima N."/>
            <person name="Tabata S."/>
        </authorList>
    </citation>
    <scope>NUCLEOTIDE SEQUENCE [LARGE SCALE GENOMIC DNA]</scope>
    <source>
        <strain>cv. Columbia</strain>
    </source>
</reference>
<reference key="2">
    <citation type="journal article" date="2017" name="Plant J.">
        <title>Araport11: a complete reannotation of the Arabidopsis thaliana reference genome.</title>
        <authorList>
            <person name="Cheng C.Y."/>
            <person name="Krishnakumar V."/>
            <person name="Chan A.P."/>
            <person name="Thibaud-Nissen F."/>
            <person name="Schobel S."/>
            <person name="Town C.D."/>
        </authorList>
    </citation>
    <scope>GENOME REANNOTATION</scope>
    <source>
        <strain>cv. Columbia</strain>
    </source>
</reference>
<reference key="3">
    <citation type="journal article" date="2003" name="Science">
        <title>Empirical analysis of transcriptional activity in the Arabidopsis genome.</title>
        <authorList>
            <person name="Yamada K."/>
            <person name="Lim J."/>
            <person name="Dale J.M."/>
            <person name="Chen H."/>
            <person name="Shinn P."/>
            <person name="Palm C.J."/>
            <person name="Southwick A.M."/>
            <person name="Wu H.C."/>
            <person name="Kim C.J."/>
            <person name="Nguyen M."/>
            <person name="Pham P.K."/>
            <person name="Cheuk R.F."/>
            <person name="Karlin-Newmann G."/>
            <person name="Liu S.X."/>
            <person name="Lam B."/>
            <person name="Sakano H."/>
            <person name="Wu T."/>
            <person name="Yu G."/>
            <person name="Miranda M."/>
            <person name="Quach H.L."/>
            <person name="Tripp M."/>
            <person name="Chang C.H."/>
            <person name="Lee J.M."/>
            <person name="Toriumi M.J."/>
            <person name="Chan M.M."/>
            <person name="Tang C.C."/>
            <person name="Onodera C.S."/>
            <person name="Deng J.M."/>
            <person name="Akiyama K."/>
            <person name="Ansari Y."/>
            <person name="Arakawa T."/>
            <person name="Banh J."/>
            <person name="Banno F."/>
            <person name="Bowser L."/>
            <person name="Brooks S.Y."/>
            <person name="Carninci P."/>
            <person name="Chao Q."/>
            <person name="Choy N."/>
            <person name="Enju A."/>
            <person name="Goldsmith A.D."/>
            <person name="Gurjal M."/>
            <person name="Hansen N.F."/>
            <person name="Hayashizaki Y."/>
            <person name="Johnson-Hopson C."/>
            <person name="Hsuan V.W."/>
            <person name="Iida K."/>
            <person name="Karnes M."/>
            <person name="Khan S."/>
            <person name="Koesema E."/>
            <person name="Ishida J."/>
            <person name="Jiang P.X."/>
            <person name="Jones T."/>
            <person name="Kawai J."/>
            <person name="Kamiya A."/>
            <person name="Meyers C."/>
            <person name="Nakajima M."/>
            <person name="Narusaka M."/>
            <person name="Seki M."/>
            <person name="Sakurai T."/>
            <person name="Satou M."/>
            <person name="Tamse R."/>
            <person name="Vaysberg M."/>
            <person name="Wallender E.K."/>
            <person name="Wong C."/>
            <person name="Yamamura Y."/>
            <person name="Yuan S."/>
            <person name="Shinozaki K."/>
            <person name="Davis R.W."/>
            <person name="Theologis A."/>
            <person name="Ecker J.R."/>
        </authorList>
    </citation>
    <scope>NUCLEOTIDE SEQUENCE [LARGE SCALE MRNA] (ISOFORM 2)</scope>
    <source>
        <strain>cv. Columbia</strain>
    </source>
</reference>
<reference key="4">
    <citation type="journal article" date="2009" name="Plant Cell">
        <title>The WD40 repeat protein NEDD1 functions in microtubule organization during cell division in Arabidopsis thaliana.</title>
        <authorList>
            <person name="Zeng C.J."/>
            <person name="Lee Y.R."/>
            <person name="Liu B."/>
        </authorList>
    </citation>
    <scope>FUNCTION</scope>
    <scope>TISSUE SPECIFICITY</scope>
    <scope>SUBCELLULAR LOCATION</scope>
    <scope>DISRUPTION PHENOTYPE</scope>
</reference>
<reference key="5">
    <citation type="journal article" date="2014" name="Curr. Biol.">
        <title>GCP-WD mediates gamma-TuRC recruitment and the geometry of microtubule nucleation in interphase arrays of Arabidopsis.</title>
        <authorList>
            <person name="Walia A."/>
            <person name="Nakamura M."/>
            <person name="Moss D."/>
            <person name="Kirik V."/>
            <person name="Hashimoto T."/>
            <person name="Ehrhardt D.W."/>
        </authorList>
    </citation>
    <scope>FUNCTION</scope>
    <scope>SUBCELLULAR LOCATION</scope>
</reference>
<protein>
    <recommendedName>
        <fullName evidence="5">Protein NEDD1</fullName>
    </recommendedName>
    <alternativeName>
        <fullName evidence="5">Neural precursor cell expressed developmentally down-regulated protein 1 homolog</fullName>
    </alternativeName>
    <alternativeName>
        <fullName evidence="6">Protein GCP-WD</fullName>
    </alternativeName>
</protein>
<proteinExistence type="evidence at transcript level"/>
<keyword id="KW-0025">Alternative splicing</keyword>
<keyword id="KW-0137">Centromere</keyword>
<keyword id="KW-0158">Chromosome</keyword>
<keyword id="KW-0175">Coiled coil</keyword>
<keyword id="KW-0963">Cytoplasm</keyword>
<keyword id="KW-0206">Cytoskeleton</keyword>
<keyword id="KW-0995">Kinetochore</keyword>
<keyword id="KW-0539">Nucleus</keyword>
<keyword id="KW-1185">Reference proteome</keyword>
<keyword id="KW-0677">Repeat</keyword>
<keyword id="KW-0853">WD repeat</keyword>
<gene>
    <name evidence="5" type="primary">NEDD1</name>
    <name evidence="6" type="synonym">GCP-WD</name>
    <name evidence="8" type="ordered locus">At5g05970</name>
    <name evidence="9" type="ORF">K18J17.16</name>
</gene>
<accession>B3H5K9</accession>
<accession>B6EUA6</accession>
<accession>Q9FI89</accession>
<comment type="function">
    <text evidence="3 4">Regulates microtubules organization in a centrosome-independent manner. Required for the spindle to be positioned correctly and for the function of gamma-tubulin in organizing phragmoplast microtubules (PubMed:19383896). Component of active gamma-tubulin ring complexes (gamma-TuRCs) associated with cortical microtubules in interphase cells (PubMed:25438942). Mediates gamma-TuRC recruitment to the nucleation sites and is important for determining the ratio of branched to parallel nucleation (PubMed:25438942). May mediate the localization of GCP2 and GCP3 to the nuclear envelope (PubMed:19383896).</text>
</comment>
<comment type="subcellular location">
    <subcellularLocation>
        <location evidence="3 4">Nucleus envelope</location>
    </subcellularLocation>
    <subcellularLocation>
        <location evidence="3">Chromosome</location>
        <location evidence="3">Centromere</location>
        <location evidence="3">Kinetochore</location>
    </subcellularLocation>
    <subcellularLocation>
        <location evidence="3">Cytoplasm</location>
        <location evidence="3">Cytoskeleton</location>
        <location evidence="3">Phragmoplast</location>
    </subcellularLocation>
    <subcellularLocation>
        <location evidence="4">Cytoplasm</location>
        <location evidence="4">Cytoskeleton</location>
        <location evidence="4">Microtubule organizing center</location>
    </subcellularLocation>
    <text evidence="3">First detected in prophase on the nuclear envelope, where it appeared to cap the future spindle poles. Later detected along kinetochore microtubules (MTs) of the metaphase spindle, with more prominent signals toward the poles. In anaphase, detected with the shortening kinetochore fibers. In the developing phragmoplast, localized mainly toward the minus end of MTs.</text>
</comment>
<comment type="alternative products">
    <event type="alternative splicing"/>
    <isoform>
        <id>B3H5K9-1</id>
        <name>1</name>
        <sequence type="displayed"/>
    </isoform>
    <isoform>
        <id>B3H5K9-2</id>
        <name>2</name>
        <sequence type="described" ref="VSP_057697"/>
    </isoform>
</comment>
<comment type="tissue specificity">
    <text evidence="3">Expressed in root meristematic cells.</text>
</comment>
<comment type="disruption phenotype">
    <text evidence="3">Lethal when homozygous. Compromised asymmetric mitotic division in dividing microspores resulting in abortion of gametogenesis.</text>
</comment>
<comment type="sequence caution" evidence="7">
    <conflict type="frameshift">
        <sequence resource="EMBL" id="AY093770"/>
    </conflict>
</comment>
<comment type="sequence caution" evidence="7">
    <conflict type="erroneous gene model prediction">
        <sequence resource="EMBL-CDS" id="BAB10802"/>
    </conflict>
</comment>
<name>NEDD1_ARATH</name>
<evidence type="ECO:0000255" key="1"/>
<evidence type="ECO:0000256" key="2">
    <source>
        <dbReference type="SAM" id="MobiDB-lite"/>
    </source>
</evidence>
<evidence type="ECO:0000269" key="3">
    <source>
    </source>
</evidence>
<evidence type="ECO:0000269" key="4">
    <source>
    </source>
</evidence>
<evidence type="ECO:0000303" key="5">
    <source>
    </source>
</evidence>
<evidence type="ECO:0000303" key="6">
    <source>
    </source>
</evidence>
<evidence type="ECO:0000305" key="7"/>
<evidence type="ECO:0000312" key="8">
    <source>
        <dbReference type="Araport" id="AT5G05970"/>
    </source>
</evidence>
<evidence type="ECO:0000312" key="9">
    <source>
        <dbReference type="EMBL" id="BAB10802.1"/>
    </source>
</evidence>
<evidence type="ECO:0000312" key="10">
    <source>
        <dbReference type="Proteomes" id="UP000006548"/>
    </source>
</evidence>
<organism evidence="10">
    <name type="scientific">Arabidopsis thaliana</name>
    <name type="common">Mouse-ear cress</name>
    <dbReference type="NCBI Taxonomy" id="3702"/>
    <lineage>
        <taxon>Eukaryota</taxon>
        <taxon>Viridiplantae</taxon>
        <taxon>Streptophyta</taxon>
        <taxon>Embryophyta</taxon>
        <taxon>Tracheophyta</taxon>
        <taxon>Spermatophyta</taxon>
        <taxon>Magnoliopsida</taxon>
        <taxon>eudicotyledons</taxon>
        <taxon>Gunneridae</taxon>
        <taxon>Pentapetalae</taxon>
        <taxon>rosids</taxon>
        <taxon>malvids</taxon>
        <taxon>Brassicales</taxon>
        <taxon>Brassicaceae</taxon>
        <taxon>Camelineae</taxon>
        <taxon>Arabidopsis</taxon>
    </lineage>
</organism>
<feature type="chain" id="PRO_0000433252" description="Protein NEDD1">
    <location>
        <begin position="1"/>
        <end position="782"/>
    </location>
</feature>
<feature type="repeat" description="WD 1" evidence="1">
    <location>
        <begin position="1"/>
        <end position="34"/>
    </location>
</feature>
<feature type="repeat" description="WD 2" evidence="1">
    <location>
        <begin position="41"/>
        <end position="80"/>
    </location>
</feature>
<feature type="repeat" description="WD 3" evidence="1">
    <location>
        <begin position="90"/>
        <end position="130"/>
    </location>
</feature>
<feature type="repeat" description="WD 4" evidence="1">
    <location>
        <begin position="133"/>
        <end position="172"/>
    </location>
</feature>
<feature type="repeat" description="WD 5" evidence="1">
    <location>
        <begin position="176"/>
        <end position="216"/>
    </location>
</feature>
<feature type="repeat" description="WD 6" evidence="1">
    <location>
        <begin position="220"/>
        <end position="260"/>
    </location>
</feature>
<feature type="repeat" description="WD 7" evidence="1">
    <location>
        <begin position="262"/>
        <end position="301"/>
    </location>
</feature>
<feature type="repeat" description="WD 8" evidence="1">
    <location>
        <begin position="307"/>
        <end position="358"/>
    </location>
</feature>
<feature type="region of interest" description="Disordered" evidence="2">
    <location>
        <begin position="350"/>
        <end position="393"/>
    </location>
</feature>
<feature type="region of interest" description="Disordered" evidence="2">
    <location>
        <begin position="467"/>
        <end position="512"/>
    </location>
</feature>
<feature type="coiled-coil region" evidence="1">
    <location>
        <begin position="753"/>
        <end position="782"/>
    </location>
</feature>
<feature type="compositionally biased region" description="Polar residues" evidence="2">
    <location>
        <begin position="352"/>
        <end position="362"/>
    </location>
</feature>
<feature type="compositionally biased region" description="Polar residues" evidence="2">
    <location>
        <begin position="370"/>
        <end position="386"/>
    </location>
</feature>
<feature type="compositionally biased region" description="Polar residues" evidence="2">
    <location>
        <begin position="488"/>
        <end position="498"/>
    </location>
</feature>
<feature type="splice variant" id="VSP_057697" description="In isoform 2.">
    <location>
        <position position="689"/>
    </location>
</feature>
<dbReference type="EMBL" id="AB017060">
    <property type="protein sequence ID" value="BAB10802.1"/>
    <property type="status" value="ALT_SEQ"/>
    <property type="molecule type" value="Genomic_DNA"/>
</dbReference>
<dbReference type="EMBL" id="CP002688">
    <property type="protein sequence ID" value="AED90947.1"/>
    <property type="molecule type" value="Genomic_DNA"/>
</dbReference>
<dbReference type="EMBL" id="CP002688">
    <property type="protein sequence ID" value="AED90948.1"/>
    <property type="molecule type" value="Genomic_DNA"/>
</dbReference>
<dbReference type="EMBL" id="AY093770">
    <property type="status" value="NOT_ANNOTATED_CDS"/>
    <property type="molecule type" value="mRNA"/>
</dbReference>
<dbReference type="RefSeq" id="NP_001119176.1">
    <molecule id="B3H5K9-1"/>
    <property type="nucleotide sequence ID" value="NM_001125704.1"/>
</dbReference>
<dbReference type="RefSeq" id="NP_196216.2">
    <molecule id="B3H5K9-2"/>
    <property type="nucleotide sequence ID" value="NM_120679.3"/>
</dbReference>
<dbReference type="SMR" id="B3H5K9"/>
<dbReference type="FunCoup" id="B3H5K9">
    <property type="interactions" value="3115"/>
</dbReference>
<dbReference type="STRING" id="3702.B3H5K9"/>
<dbReference type="GlyGen" id="B3H5K9">
    <property type="glycosylation" value="4 sites, 1 O-linked glycan (3 sites)"/>
</dbReference>
<dbReference type="iPTMnet" id="B3H5K9"/>
<dbReference type="PaxDb" id="3702-AT5G05970.2"/>
<dbReference type="ProteomicsDB" id="238517">
    <molecule id="B3H5K9-1"/>
</dbReference>
<dbReference type="EnsemblPlants" id="AT5G05970.1">
    <molecule id="B3H5K9-2"/>
    <property type="protein sequence ID" value="AT5G05970.1"/>
    <property type="gene ID" value="AT5G05970"/>
</dbReference>
<dbReference type="EnsemblPlants" id="AT5G05970.2">
    <molecule id="B3H5K9-1"/>
    <property type="protein sequence ID" value="AT5G05970.2"/>
    <property type="gene ID" value="AT5G05970"/>
</dbReference>
<dbReference type="GeneID" id="830483"/>
<dbReference type="Gramene" id="AT5G05970.1">
    <molecule id="B3H5K9-2"/>
    <property type="protein sequence ID" value="AT5G05970.1"/>
    <property type="gene ID" value="AT5G05970"/>
</dbReference>
<dbReference type="Gramene" id="AT5G05970.2">
    <molecule id="B3H5K9-1"/>
    <property type="protein sequence ID" value="AT5G05970.2"/>
    <property type="gene ID" value="AT5G05970"/>
</dbReference>
<dbReference type="KEGG" id="ath:AT5G05970"/>
<dbReference type="Araport" id="AT5G05970"/>
<dbReference type="TAIR" id="AT5G05970">
    <property type="gene designation" value="NEDD1"/>
</dbReference>
<dbReference type="eggNOG" id="KOG4378">
    <property type="taxonomic scope" value="Eukaryota"/>
</dbReference>
<dbReference type="InParanoid" id="B3H5K9"/>
<dbReference type="OMA" id="GTMVLWD"/>
<dbReference type="PhylomeDB" id="B3H5K9"/>
<dbReference type="CD-CODE" id="33FCD62D">
    <property type="entry name" value="Centrosome"/>
</dbReference>
<dbReference type="PRO" id="PR:B3H5K9"/>
<dbReference type="Proteomes" id="UP000006548">
    <property type="component" value="Chromosome 5"/>
</dbReference>
<dbReference type="ExpressionAtlas" id="B3H5K9">
    <property type="expression patterns" value="baseline and differential"/>
</dbReference>
<dbReference type="GO" id="GO:0000776">
    <property type="term" value="C:kinetochore"/>
    <property type="evidence" value="ECO:0007669"/>
    <property type="project" value="UniProtKB-KW"/>
</dbReference>
<dbReference type="GO" id="GO:0005828">
    <property type="term" value="C:kinetochore microtubule"/>
    <property type="evidence" value="ECO:0000314"/>
    <property type="project" value="TAIR"/>
</dbReference>
<dbReference type="GO" id="GO:0005815">
    <property type="term" value="C:microtubule organizing center"/>
    <property type="evidence" value="ECO:0007669"/>
    <property type="project" value="UniProtKB-SubCell"/>
</dbReference>
<dbReference type="GO" id="GO:0005635">
    <property type="term" value="C:nuclear envelope"/>
    <property type="evidence" value="ECO:0007669"/>
    <property type="project" value="UniProtKB-SubCell"/>
</dbReference>
<dbReference type="GO" id="GO:0009524">
    <property type="term" value="C:phragmoplast"/>
    <property type="evidence" value="ECO:0007669"/>
    <property type="project" value="UniProtKB-SubCell"/>
</dbReference>
<dbReference type="GO" id="GO:0140496">
    <property type="term" value="F:gamma-tubulin complex binding"/>
    <property type="evidence" value="ECO:0007669"/>
    <property type="project" value="InterPro"/>
</dbReference>
<dbReference type="GO" id="GO:0000919">
    <property type="term" value="P:cell plate assembly"/>
    <property type="evidence" value="ECO:0000315"/>
    <property type="project" value="TAIR"/>
</dbReference>
<dbReference type="GO" id="GO:0009553">
    <property type="term" value="P:embryo sac development"/>
    <property type="evidence" value="ECO:0000315"/>
    <property type="project" value="TAIR"/>
</dbReference>
<dbReference type="GO" id="GO:0009555">
    <property type="term" value="P:pollen development"/>
    <property type="evidence" value="ECO:0000315"/>
    <property type="project" value="TAIR"/>
</dbReference>
<dbReference type="GO" id="GO:0032467">
    <property type="term" value="P:positive regulation of cytokinesis"/>
    <property type="evidence" value="ECO:0000315"/>
    <property type="project" value="TAIR"/>
</dbReference>
<dbReference type="GO" id="GO:0010968">
    <property type="term" value="P:regulation of microtubule nucleation"/>
    <property type="evidence" value="ECO:0007669"/>
    <property type="project" value="InterPro"/>
</dbReference>
<dbReference type="GO" id="GO:0060236">
    <property type="term" value="P:regulation of mitotic spindle organization"/>
    <property type="evidence" value="ECO:0000315"/>
    <property type="project" value="TAIR"/>
</dbReference>
<dbReference type="GO" id="GO:2000694">
    <property type="term" value="P:regulation of phragmoplast microtubule organization"/>
    <property type="evidence" value="ECO:0000315"/>
    <property type="project" value="TAIR"/>
</dbReference>
<dbReference type="FunFam" id="2.130.10.10:FF:000344">
    <property type="entry name" value="Protein NEDD1"/>
    <property type="match status" value="1"/>
</dbReference>
<dbReference type="Gene3D" id="2.130.10.10">
    <property type="entry name" value="YVTN repeat-like/Quinoprotein amine dehydrogenase"/>
    <property type="match status" value="2"/>
</dbReference>
<dbReference type="InterPro" id="IPR044621">
    <property type="entry name" value="NEDD1"/>
</dbReference>
<dbReference type="InterPro" id="IPR015943">
    <property type="entry name" value="WD40/YVTN_repeat-like_dom_sf"/>
</dbReference>
<dbReference type="InterPro" id="IPR036322">
    <property type="entry name" value="WD40_repeat_dom_sf"/>
</dbReference>
<dbReference type="InterPro" id="IPR001680">
    <property type="entry name" value="WD40_rpt"/>
</dbReference>
<dbReference type="PANTHER" id="PTHR45096">
    <property type="entry name" value="PROTEIN NEDD1"/>
    <property type="match status" value="1"/>
</dbReference>
<dbReference type="PANTHER" id="PTHR45096:SF1">
    <property type="entry name" value="PROTEIN NEDD1"/>
    <property type="match status" value="1"/>
</dbReference>
<dbReference type="Pfam" id="PF00400">
    <property type="entry name" value="WD40"/>
    <property type="match status" value="3"/>
</dbReference>
<dbReference type="SMART" id="SM00320">
    <property type="entry name" value="WD40"/>
    <property type="match status" value="6"/>
</dbReference>
<dbReference type="SUPFAM" id="SSF50978">
    <property type="entry name" value="WD40 repeat-like"/>
    <property type="match status" value="1"/>
</dbReference>
<dbReference type="PROSITE" id="PS00678">
    <property type="entry name" value="WD_REPEATS_1"/>
    <property type="match status" value="1"/>
</dbReference>
<dbReference type="PROSITE" id="PS50082">
    <property type="entry name" value="WD_REPEATS_2"/>
    <property type="match status" value="1"/>
</dbReference>
<dbReference type="PROSITE" id="PS50294">
    <property type="entry name" value="WD_REPEATS_REGION"/>
    <property type="match status" value="1"/>
</dbReference>
<sequence>MMSNLVEPSWRLLAASGGDTVKLFDVSADSGDPCVLSYTPSPGCAVNSVKWNHTNLVVASTGEDKKISLWRKNGQSLGTVPVTGKDGGDSAEECLSAISFSKKGSRYICSGGTGQIVKIWDLQRKLCIKKLKGHTSTITGVMYNCKDEHLASVSVGGDLIVHNLASGARATELKDPNGQVLRLLDYSRSSRHLLVTAGDDGTVHLWDTTGRSPKMSWLKQHSAPTAGVCFSPSNEKIIASVGMDKKLYTYDSGSRRSSSCIAYEAPFSSLAFGDNGYILVAGTSNGRVVFYDIRGKPQPVTVLHAFSNSEDVTSLSWQTSKPVIVNEKNYTSEMALLGSTVEDSVVIPDPLPSTTPSASQSAMAPGSRGVSASTVNASSVEQTPNRNHLWPSGPLGRLHALRANDSYNDDMGVFSPIIDVSSVEKWADSEGYNNKDHLVVDNKPSSLLFPSSSKGYSFGDNGSKEHPIFDWKPSSTSKQDDPRAAFSSFGSITPTASSKSEDSALTPPEAWGGDKFSEKFNQLANEKFSDKFSHLHAPSRLAVSSTGASTSGSMFSSSRDFPLSHGQTNFANASLEFPRIRDFSSTFETSSTQTDNNLPSSPLFTKGITAPGNIDSLRLSPNFTRRFSTYAERISTTSSFSDGASLSLGGSPKIKKTGSETREEVLNHLLARPETVVATEAGAMPLMNQGGLKQSQTDQQQVMGSSNFTLQLFQRTLEGTLDSFQNSIHDDVRNLHIEILRQFHMHEMEMSKVLSSILENQAEQMKELKLLRKENQELRQRL</sequence>